<accession>P0CAN1</accession>
<gene>
    <name type="ordered locus">Pret-148</name>
</gene>
<keyword id="KW-1262">Eukaryotic host gene expression shutoff by virus</keyword>
<keyword id="KW-1193">Eukaryotic host translation shutoff by virus</keyword>
<keyword id="KW-1077">G0/G1 host cell cycle checkpoint dysregulation by virus</keyword>
<keyword id="KW-1038">Host endoplasmic reticulum</keyword>
<keyword id="KW-1190">Host gene expression shutoff by virus</keyword>
<keyword id="KW-0945">Host-virus interaction</keyword>
<keyword id="KW-1121">Modulation of host cell cycle by virus</keyword>
<organismHost>
    <name type="scientific">Ornithodoros</name>
    <name type="common">relapsing fever ticks</name>
    <dbReference type="NCBI Taxonomy" id="6937"/>
</organismHost>
<organismHost>
    <name type="scientific">Phacochoerus aethiopicus</name>
    <name type="common">Warthog</name>
    <dbReference type="NCBI Taxonomy" id="85517"/>
</organismHost>
<organismHost>
    <name type="scientific">Phacochoerus africanus</name>
    <name type="common">Warthog</name>
    <dbReference type="NCBI Taxonomy" id="41426"/>
</organismHost>
<organismHost>
    <name type="scientific">Potamochoerus larvatus</name>
    <name type="common">Bushpig</name>
    <dbReference type="NCBI Taxonomy" id="273792"/>
</organismHost>
<organismHost>
    <name type="scientific">Sus scrofa</name>
    <name type="common">Pig</name>
    <dbReference type="NCBI Taxonomy" id="9823"/>
</organismHost>
<organism>
    <name type="scientific">African swine fever virus (isolate Tick/South Africa/Pretoriuskop Pr4/1996)</name>
    <name type="common">ASFV</name>
    <dbReference type="NCBI Taxonomy" id="561443"/>
    <lineage>
        <taxon>Viruses</taxon>
        <taxon>Varidnaviria</taxon>
        <taxon>Bamfordvirae</taxon>
        <taxon>Nucleocytoviricota</taxon>
        <taxon>Pokkesviricetes</taxon>
        <taxon>Asfuvirales</taxon>
        <taxon>Asfarviridae</taxon>
        <taxon>Asfivirus</taxon>
        <taxon>African swine fever virus</taxon>
    </lineage>
</organism>
<name>VFE66_ASFP4</name>
<evidence type="ECO:0000250" key="1">
    <source>
        <dbReference type="UniProtKB" id="Q65204"/>
    </source>
</evidence>
<evidence type="ECO:0000305" key="2"/>
<reference key="1">
    <citation type="submission" date="2003-03" db="EMBL/GenBank/DDBJ databases">
        <title>African swine fever virus genomes.</title>
        <authorList>
            <person name="Kutish G.F."/>
            <person name="Rock D.L."/>
        </authorList>
    </citation>
    <scope>NUCLEOTIDE SEQUENCE [GENOMIC DNA]</scope>
</reference>
<proteinExistence type="inferred from homology"/>
<feature type="chain" id="PRO_0000373767" description="Host translation inhibitor E66L">
    <location>
        <begin position="1"/>
        <end position="45"/>
    </location>
</feature>
<protein>
    <recommendedName>
        <fullName evidence="2">Host translation inhibitor E66L</fullName>
        <shortName>pE66L</shortName>
    </recommendedName>
</protein>
<comment type="function">
    <text evidence="1">Inhibits host protein translation, probably through the EIF2AK2/EIF2S1 signaling pathway (By similarity). Promotes cell retention in the G0/G1 phase (By similarity).</text>
</comment>
<comment type="subcellular location">
    <subcellularLocation>
        <location evidence="1">Host endoplasmic reticulum</location>
    </subcellularLocation>
</comment>
<comment type="similarity">
    <text evidence="2">Belongs to the asfivirus E66L family.</text>
</comment>
<sequence length="45" mass="5808">MLKYIYMHLSHKYNHILFTYNMRIYLIKRNHMLFTHMFTTYAYIM</sequence>
<dbReference type="EMBL" id="AY261363">
    <property type="status" value="NOT_ANNOTATED_CDS"/>
    <property type="molecule type" value="Genomic_DNA"/>
</dbReference>
<dbReference type="Proteomes" id="UP000000859">
    <property type="component" value="Segment"/>
</dbReference>
<dbReference type="GO" id="GO:0044165">
    <property type="term" value="C:host cell endoplasmic reticulum"/>
    <property type="evidence" value="ECO:0007669"/>
    <property type="project" value="UniProtKB-SubCell"/>
</dbReference>
<dbReference type="GO" id="GO:0039646">
    <property type="term" value="P:symbiont-mediated perturbation of host cell cycle G0/G1 transition checkpoint"/>
    <property type="evidence" value="ECO:0007669"/>
    <property type="project" value="UniProtKB-KW"/>
</dbReference>
<dbReference type="GO" id="GO:0044071">
    <property type="term" value="P:symbiont-mediated perturbation of host cell cycle progression"/>
    <property type="evidence" value="ECO:0007669"/>
    <property type="project" value="UniProtKB-KW"/>
</dbReference>
<dbReference type="GO" id="GO:0039657">
    <property type="term" value="P:symbiont-mediated suppression of host gene expression"/>
    <property type="evidence" value="ECO:0007669"/>
    <property type="project" value="UniProtKB-KW"/>
</dbReference>